<accession>A4G4F3</accession>
<gene>
    <name evidence="1" type="primary">aroC</name>
    <name type="ordered locus">HEAR1213</name>
</gene>
<sequence length="366" mass="39148">MSGNTFGTLFTVTTFGESHGPAIGCVIDGCPPGMVLSEADIQFDLDRRKPGTSRHVTQRQESDTVEILSGVFEGKTTGTPIALLIRNEDQRSKDYGNITETFRPGHADYTYWHKYGIRDPRGGGRSSARLTAPVVGAAAIAKKWLLEQYGTTFKGCMSQLGEIAIPFESWEHVPNNPFFSANASILPQLEAYMDDLRKNGDSCGARIDVVAENVPIGLGEPIYDKLDAEIAYALMGINAVKGVEIGAGFKSVAQKGTEHGDELTPDGFASNNAGGVLGGISTGQNITASMAIKPTSSIRTARHSIDKDGHPIMVETFGRHDPCVGIRATPIAEAMLALVLMDHALRHRAQCGDVKVSPPPIPASSR</sequence>
<keyword id="KW-0028">Amino-acid biosynthesis</keyword>
<keyword id="KW-0057">Aromatic amino acid biosynthesis</keyword>
<keyword id="KW-0274">FAD</keyword>
<keyword id="KW-0285">Flavoprotein</keyword>
<keyword id="KW-0288">FMN</keyword>
<keyword id="KW-0456">Lyase</keyword>
<keyword id="KW-0521">NADP</keyword>
<keyword id="KW-1185">Reference proteome</keyword>
<reference key="1">
    <citation type="journal article" date="2007" name="PLoS Genet.">
        <title>A tale of two oxidation states: bacterial colonization of arsenic-rich environments.</title>
        <authorList>
            <person name="Muller D."/>
            <person name="Medigue C."/>
            <person name="Koechler S."/>
            <person name="Barbe V."/>
            <person name="Barakat M."/>
            <person name="Talla E."/>
            <person name="Bonnefoy V."/>
            <person name="Krin E."/>
            <person name="Arsene-Ploetze F."/>
            <person name="Carapito C."/>
            <person name="Chandler M."/>
            <person name="Cournoyer B."/>
            <person name="Cruveiller S."/>
            <person name="Dossat C."/>
            <person name="Duval S."/>
            <person name="Heymann M."/>
            <person name="Leize E."/>
            <person name="Lieutaud A."/>
            <person name="Lievremont D."/>
            <person name="Makita Y."/>
            <person name="Mangenot S."/>
            <person name="Nitschke W."/>
            <person name="Ortet P."/>
            <person name="Perdrial N."/>
            <person name="Schoepp B."/>
            <person name="Siguier P."/>
            <person name="Simeonova D.D."/>
            <person name="Rouy Z."/>
            <person name="Segurens B."/>
            <person name="Turlin E."/>
            <person name="Vallenet D."/>
            <person name="van Dorsselaer A."/>
            <person name="Weiss S."/>
            <person name="Weissenbach J."/>
            <person name="Lett M.-C."/>
            <person name="Danchin A."/>
            <person name="Bertin P.N."/>
        </authorList>
    </citation>
    <scope>NUCLEOTIDE SEQUENCE [LARGE SCALE GENOMIC DNA]</scope>
    <source>
        <strain>ULPAs1</strain>
    </source>
</reference>
<comment type="function">
    <text evidence="1">Catalyzes the anti-1,4-elimination of the C-3 phosphate and the C-6 proR hydrogen from 5-enolpyruvylshikimate-3-phosphate (EPSP) to yield chorismate, which is the branch point compound that serves as the starting substrate for the three terminal pathways of aromatic amino acid biosynthesis. This reaction introduces a second double bond into the aromatic ring system.</text>
</comment>
<comment type="catalytic activity">
    <reaction evidence="1">
        <text>5-O-(1-carboxyvinyl)-3-phosphoshikimate = chorismate + phosphate</text>
        <dbReference type="Rhea" id="RHEA:21020"/>
        <dbReference type="ChEBI" id="CHEBI:29748"/>
        <dbReference type="ChEBI" id="CHEBI:43474"/>
        <dbReference type="ChEBI" id="CHEBI:57701"/>
        <dbReference type="EC" id="4.2.3.5"/>
    </reaction>
</comment>
<comment type="cofactor">
    <cofactor evidence="1">
        <name>FMNH2</name>
        <dbReference type="ChEBI" id="CHEBI:57618"/>
    </cofactor>
    <text evidence="1">Reduced FMN (FMNH(2)).</text>
</comment>
<comment type="pathway">
    <text evidence="1">Metabolic intermediate biosynthesis; chorismate biosynthesis; chorismate from D-erythrose 4-phosphate and phosphoenolpyruvate: step 7/7.</text>
</comment>
<comment type="subunit">
    <text evidence="1">Homotetramer.</text>
</comment>
<comment type="similarity">
    <text evidence="1">Belongs to the chorismate synthase family.</text>
</comment>
<name>AROC_HERAR</name>
<evidence type="ECO:0000255" key="1">
    <source>
        <dbReference type="HAMAP-Rule" id="MF_00300"/>
    </source>
</evidence>
<feature type="chain" id="PRO_1000022498" description="Chorismate synthase">
    <location>
        <begin position="1"/>
        <end position="366"/>
    </location>
</feature>
<feature type="binding site" evidence="1">
    <location>
        <position position="48"/>
    </location>
    <ligand>
        <name>NADP(+)</name>
        <dbReference type="ChEBI" id="CHEBI:58349"/>
    </ligand>
</feature>
<feature type="binding site" evidence="1">
    <location>
        <position position="54"/>
    </location>
    <ligand>
        <name>NADP(+)</name>
        <dbReference type="ChEBI" id="CHEBI:58349"/>
    </ligand>
</feature>
<feature type="binding site" evidence="1">
    <location>
        <begin position="125"/>
        <end position="127"/>
    </location>
    <ligand>
        <name>FMN</name>
        <dbReference type="ChEBI" id="CHEBI:58210"/>
    </ligand>
</feature>
<feature type="binding site" evidence="1">
    <location>
        <begin position="238"/>
        <end position="239"/>
    </location>
    <ligand>
        <name>FMN</name>
        <dbReference type="ChEBI" id="CHEBI:58210"/>
    </ligand>
</feature>
<feature type="binding site" evidence="1">
    <location>
        <position position="278"/>
    </location>
    <ligand>
        <name>FMN</name>
        <dbReference type="ChEBI" id="CHEBI:58210"/>
    </ligand>
</feature>
<feature type="binding site" evidence="1">
    <location>
        <begin position="293"/>
        <end position="297"/>
    </location>
    <ligand>
        <name>FMN</name>
        <dbReference type="ChEBI" id="CHEBI:58210"/>
    </ligand>
</feature>
<feature type="binding site" evidence="1">
    <location>
        <position position="319"/>
    </location>
    <ligand>
        <name>FMN</name>
        <dbReference type="ChEBI" id="CHEBI:58210"/>
    </ligand>
</feature>
<protein>
    <recommendedName>
        <fullName evidence="1">Chorismate synthase</fullName>
        <shortName evidence="1">CS</shortName>
        <ecNumber evidence="1">4.2.3.5</ecNumber>
    </recommendedName>
    <alternativeName>
        <fullName evidence="1">5-enolpyruvylshikimate-3-phosphate phospholyase</fullName>
    </alternativeName>
</protein>
<organism>
    <name type="scientific">Herminiimonas arsenicoxydans</name>
    <dbReference type="NCBI Taxonomy" id="204773"/>
    <lineage>
        <taxon>Bacteria</taxon>
        <taxon>Pseudomonadati</taxon>
        <taxon>Pseudomonadota</taxon>
        <taxon>Betaproteobacteria</taxon>
        <taxon>Burkholderiales</taxon>
        <taxon>Oxalobacteraceae</taxon>
        <taxon>Herminiimonas</taxon>
    </lineage>
</organism>
<dbReference type="EC" id="4.2.3.5" evidence="1"/>
<dbReference type="EMBL" id="CU207211">
    <property type="protein sequence ID" value="CAL61390.1"/>
    <property type="molecule type" value="Genomic_DNA"/>
</dbReference>
<dbReference type="SMR" id="A4G4F3"/>
<dbReference type="STRING" id="204773.HEAR1213"/>
<dbReference type="KEGG" id="har:HEAR1213"/>
<dbReference type="eggNOG" id="COG0082">
    <property type="taxonomic scope" value="Bacteria"/>
</dbReference>
<dbReference type="HOGENOM" id="CLU_034547_0_2_4"/>
<dbReference type="OrthoDB" id="9771806at2"/>
<dbReference type="UniPathway" id="UPA00053">
    <property type="reaction ID" value="UER00090"/>
</dbReference>
<dbReference type="Proteomes" id="UP000006697">
    <property type="component" value="Chromosome"/>
</dbReference>
<dbReference type="GO" id="GO:0005829">
    <property type="term" value="C:cytosol"/>
    <property type="evidence" value="ECO:0007669"/>
    <property type="project" value="TreeGrafter"/>
</dbReference>
<dbReference type="GO" id="GO:0004107">
    <property type="term" value="F:chorismate synthase activity"/>
    <property type="evidence" value="ECO:0007669"/>
    <property type="project" value="UniProtKB-UniRule"/>
</dbReference>
<dbReference type="GO" id="GO:0010181">
    <property type="term" value="F:FMN binding"/>
    <property type="evidence" value="ECO:0007669"/>
    <property type="project" value="TreeGrafter"/>
</dbReference>
<dbReference type="GO" id="GO:0008652">
    <property type="term" value="P:amino acid biosynthetic process"/>
    <property type="evidence" value="ECO:0007669"/>
    <property type="project" value="UniProtKB-KW"/>
</dbReference>
<dbReference type="GO" id="GO:0009073">
    <property type="term" value="P:aromatic amino acid family biosynthetic process"/>
    <property type="evidence" value="ECO:0007669"/>
    <property type="project" value="UniProtKB-KW"/>
</dbReference>
<dbReference type="GO" id="GO:0009423">
    <property type="term" value="P:chorismate biosynthetic process"/>
    <property type="evidence" value="ECO:0007669"/>
    <property type="project" value="UniProtKB-UniRule"/>
</dbReference>
<dbReference type="CDD" id="cd07304">
    <property type="entry name" value="Chorismate_synthase"/>
    <property type="match status" value="1"/>
</dbReference>
<dbReference type="FunFam" id="3.60.150.10:FF:000001">
    <property type="entry name" value="Chorismate synthase"/>
    <property type="match status" value="1"/>
</dbReference>
<dbReference type="Gene3D" id="3.60.150.10">
    <property type="entry name" value="Chorismate synthase AroC"/>
    <property type="match status" value="1"/>
</dbReference>
<dbReference type="HAMAP" id="MF_00300">
    <property type="entry name" value="Chorismate_synth"/>
    <property type="match status" value="1"/>
</dbReference>
<dbReference type="InterPro" id="IPR000453">
    <property type="entry name" value="Chorismate_synth"/>
</dbReference>
<dbReference type="InterPro" id="IPR035904">
    <property type="entry name" value="Chorismate_synth_AroC_sf"/>
</dbReference>
<dbReference type="InterPro" id="IPR020541">
    <property type="entry name" value="Chorismate_synthase_CS"/>
</dbReference>
<dbReference type="NCBIfam" id="TIGR00033">
    <property type="entry name" value="aroC"/>
    <property type="match status" value="1"/>
</dbReference>
<dbReference type="NCBIfam" id="NF003793">
    <property type="entry name" value="PRK05382.1"/>
    <property type="match status" value="1"/>
</dbReference>
<dbReference type="PANTHER" id="PTHR21085">
    <property type="entry name" value="CHORISMATE SYNTHASE"/>
    <property type="match status" value="1"/>
</dbReference>
<dbReference type="PANTHER" id="PTHR21085:SF0">
    <property type="entry name" value="CHORISMATE SYNTHASE"/>
    <property type="match status" value="1"/>
</dbReference>
<dbReference type="Pfam" id="PF01264">
    <property type="entry name" value="Chorismate_synt"/>
    <property type="match status" value="1"/>
</dbReference>
<dbReference type="PIRSF" id="PIRSF001456">
    <property type="entry name" value="Chorismate_synth"/>
    <property type="match status" value="1"/>
</dbReference>
<dbReference type="SUPFAM" id="SSF103263">
    <property type="entry name" value="Chorismate synthase, AroC"/>
    <property type="match status" value="1"/>
</dbReference>
<dbReference type="PROSITE" id="PS00787">
    <property type="entry name" value="CHORISMATE_SYNTHASE_1"/>
    <property type="match status" value="1"/>
</dbReference>
<dbReference type="PROSITE" id="PS00788">
    <property type="entry name" value="CHORISMATE_SYNTHASE_2"/>
    <property type="match status" value="1"/>
</dbReference>
<dbReference type="PROSITE" id="PS00789">
    <property type="entry name" value="CHORISMATE_SYNTHASE_3"/>
    <property type="match status" value="1"/>
</dbReference>
<proteinExistence type="inferred from homology"/>